<gene>
    <name type="primary">rbsR</name>
    <name type="ordered locus">HI_0506</name>
</gene>
<feature type="initiator methionine" description="Removed" evidence="1">
    <location>
        <position position="1"/>
    </location>
</feature>
<feature type="chain" id="PRO_0000107989" description="Ribose operon repressor">
    <location>
        <begin position="2"/>
        <end position="332"/>
    </location>
</feature>
<feature type="domain" description="HTH lacI-type" evidence="2">
    <location>
        <begin position="2"/>
        <end position="56"/>
    </location>
</feature>
<feature type="DNA-binding region" description="H-T-H motif" evidence="2">
    <location>
        <begin position="4"/>
        <end position="23"/>
    </location>
</feature>
<evidence type="ECO:0000250" key="1"/>
<evidence type="ECO:0000255" key="2">
    <source>
        <dbReference type="PROSITE-ProRule" id="PRU00111"/>
    </source>
</evidence>
<sequence>MATMKDIARLAQVSTSTVSHVINGSRFVSDEIREKVMRIVAELNYTPSAVARSLKVRETKTIGLLVTATNNPFFAEVMAGVEQYCQKNQYNLIIATTGGDAKRLQQNLQTLMHKQVDGLLLMCGDSRFQADIELAISLPLVVMDWWFTELNADKILENSALGGYLATKALIDAGHRKIGIITGNLKKSVAQNRLQGYKNALSEAKIALNPHWIVESHFDFEGGVLGIQSLLTQSSRPTAVFCCSDTIAVGAYQAIQQQGLRIPQDLSIMGYDDIELARYLSPPLSTICQPKAELGKLAVETLLQRIKNPNENYRTLVLEPTCVLRESIYSLK</sequence>
<protein>
    <recommendedName>
        <fullName>Ribose operon repressor</fullName>
    </recommendedName>
</protein>
<accession>P44329</accession>
<reference key="1">
    <citation type="journal article" date="1995" name="Science">
        <title>Whole-genome random sequencing and assembly of Haemophilus influenzae Rd.</title>
        <authorList>
            <person name="Fleischmann R.D."/>
            <person name="Adams M.D."/>
            <person name="White O."/>
            <person name="Clayton R.A."/>
            <person name="Kirkness E.F."/>
            <person name="Kerlavage A.R."/>
            <person name="Bult C.J."/>
            <person name="Tomb J.-F."/>
            <person name="Dougherty B.A."/>
            <person name="Merrick J.M."/>
            <person name="McKenney K."/>
            <person name="Sutton G.G."/>
            <person name="FitzHugh W."/>
            <person name="Fields C.A."/>
            <person name="Gocayne J.D."/>
            <person name="Scott J.D."/>
            <person name="Shirley R."/>
            <person name="Liu L.-I."/>
            <person name="Glodek A."/>
            <person name="Kelley J.M."/>
            <person name="Weidman J.F."/>
            <person name="Phillips C.A."/>
            <person name="Spriggs T."/>
            <person name="Hedblom E."/>
            <person name="Cotton M.D."/>
            <person name="Utterback T.R."/>
            <person name="Hanna M.C."/>
            <person name="Nguyen D.T."/>
            <person name="Saudek D.M."/>
            <person name="Brandon R.C."/>
            <person name="Fine L.D."/>
            <person name="Fritchman J.L."/>
            <person name="Fuhrmann J.L."/>
            <person name="Geoghagen N.S.M."/>
            <person name="Gnehm C.L."/>
            <person name="McDonald L.A."/>
            <person name="Small K.V."/>
            <person name="Fraser C.M."/>
            <person name="Smith H.O."/>
            <person name="Venter J.C."/>
        </authorList>
    </citation>
    <scope>NUCLEOTIDE SEQUENCE [LARGE SCALE GENOMIC DNA]</scope>
    <source>
        <strain>ATCC 51907 / DSM 11121 / KW20 / Rd</strain>
    </source>
</reference>
<organism>
    <name type="scientific">Haemophilus influenzae (strain ATCC 51907 / DSM 11121 / KW20 / Rd)</name>
    <dbReference type="NCBI Taxonomy" id="71421"/>
    <lineage>
        <taxon>Bacteria</taxon>
        <taxon>Pseudomonadati</taxon>
        <taxon>Pseudomonadota</taxon>
        <taxon>Gammaproteobacteria</taxon>
        <taxon>Pasteurellales</taxon>
        <taxon>Pasteurellaceae</taxon>
        <taxon>Haemophilus</taxon>
    </lineage>
</organism>
<comment type="function">
    <text evidence="1">Transcriptional repressor for the ribose rbsDACBK operon.</text>
</comment>
<name>RBSR_HAEIN</name>
<proteinExistence type="inferred from homology"/>
<keyword id="KW-0238">DNA-binding</keyword>
<keyword id="KW-1185">Reference proteome</keyword>
<keyword id="KW-0678">Repressor</keyword>
<keyword id="KW-0804">Transcription</keyword>
<keyword id="KW-0805">Transcription regulation</keyword>
<dbReference type="EMBL" id="L42023">
    <property type="protein sequence ID" value="AAC22164.1"/>
    <property type="molecule type" value="Genomic_DNA"/>
</dbReference>
<dbReference type="PIR" id="C64073">
    <property type="entry name" value="C64073"/>
</dbReference>
<dbReference type="RefSeq" id="NP_438664.1">
    <property type="nucleotide sequence ID" value="NC_000907.1"/>
</dbReference>
<dbReference type="SMR" id="P44329"/>
<dbReference type="STRING" id="71421.HI_0506"/>
<dbReference type="EnsemblBacteria" id="AAC22164">
    <property type="protein sequence ID" value="AAC22164"/>
    <property type="gene ID" value="HI_0506"/>
</dbReference>
<dbReference type="KEGG" id="hin:HI_0506"/>
<dbReference type="PATRIC" id="fig|71421.8.peg.525"/>
<dbReference type="eggNOG" id="COG1609">
    <property type="taxonomic scope" value="Bacteria"/>
</dbReference>
<dbReference type="HOGENOM" id="CLU_037628_6_2_6"/>
<dbReference type="OrthoDB" id="9798934at2"/>
<dbReference type="PhylomeDB" id="P44329"/>
<dbReference type="BioCyc" id="HINF71421:G1GJ1-519-MONOMER"/>
<dbReference type="Proteomes" id="UP000000579">
    <property type="component" value="Chromosome"/>
</dbReference>
<dbReference type="GO" id="GO:0003700">
    <property type="term" value="F:DNA-binding transcription factor activity"/>
    <property type="evidence" value="ECO:0000318"/>
    <property type="project" value="GO_Central"/>
</dbReference>
<dbReference type="GO" id="GO:0000976">
    <property type="term" value="F:transcription cis-regulatory region binding"/>
    <property type="evidence" value="ECO:0000318"/>
    <property type="project" value="GO_Central"/>
</dbReference>
<dbReference type="GO" id="GO:0006355">
    <property type="term" value="P:regulation of DNA-templated transcription"/>
    <property type="evidence" value="ECO:0000318"/>
    <property type="project" value="GO_Central"/>
</dbReference>
<dbReference type="CDD" id="cd01392">
    <property type="entry name" value="HTH_LacI"/>
    <property type="match status" value="1"/>
</dbReference>
<dbReference type="CDD" id="cd06275">
    <property type="entry name" value="PBP1_PurR"/>
    <property type="match status" value="1"/>
</dbReference>
<dbReference type="FunFam" id="1.10.260.40:FF:000002">
    <property type="entry name" value="HTH-type transcriptional repressor PurR"/>
    <property type="match status" value="1"/>
</dbReference>
<dbReference type="Gene3D" id="3.40.50.2300">
    <property type="match status" value="2"/>
</dbReference>
<dbReference type="Gene3D" id="1.10.260.40">
    <property type="entry name" value="lambda repressor-like DNA-binding domains"/>
    <property type="match status" value="1"/>
</dbReference>
<dbReference type="InterPro" id="IPR000843">
    <property type="entry name" value="HTH_LacI"/>
</dbReference>
<dbReference type="InterPro" id="IPR046335">
    <property type="entry name" value="LacI/GalR-like_sensor"/>
</dbReference>
<dbReference type="InterPro" id="IPR010982">
    <property type="entry name" value="Lambda_DNA-bd_dom_sf"/>
</dbReference>
<dbReference type="InterPro" id="IPR028082">
    <property type="entry name" value="Peripla_BP_I"/>
</dbReference>
<dbReference type="PANTHER" id="PTHR30146">
    <property type="entry name" value="LACI-RELATED TRANSCRIPTIONAL REPRESSOR"/>
    <property type="match status" value="1"/>
</dbReference>
<dbReference type="PANTHER" id="PTHR30146:SF145">
    <property type="entry name" value="RIBOSE OPERON REPRESSOR"/>
    <property type="match status" value="1"/>
</dbReference>
<dbReference type="Pfam" id="PF00356">
    <property type="entry name" value="LacI"/>
    <property type="match status" value="1"/>
</dbReference>
<dbReference type="Pfam" id="PF13377">
    <property type="entry name" value="Peripla_BP_3"/>
    <property type="match status" value="1"/>
</dbReference>
<dbReference type="PRINTS" id="PR00036">
    <property type="entry name" value="HTHLACI"/>
</dbReference>
<dbReference type="SMART" id="SM00354">
    <property type="entry name" value="HTH_LACI"/>
    <property type="match status" value="1"/>
</dbReference>
<dbReference type="SUPFAM" id="SSF47413">
    <property type="entry name" value="lambda repressor-like DNA-binding domains"/>
    <property type="match status" value="1"/>
</dbReference>
<dbReference type="SUPFAM" id="SSF53822">
    <property type="entry name" value="Periplasmic binding protein-like I"/>
    <property type="match status" value="1"/>
</dbReference>
<dbReference type="PROSITE" id="PS00356">
    <property type="entry name" value="HTH_LACI_1"/>
    <property type="match status" value="1"/>
</dbReference>
<dbReference type="PROSITE" id="PS50932">
    <property type="entry name" value="HTH_LACI_2"/>
    <property type="match status" value="1"/>
</dbReference>